<name>ACCA_LISIN</name>
<proteinExistence type="inferred from homology"/>
<accession>Q92BE3</accession>
<sequence length="318" mass="35228">MANEMEFEKPILELKSKIADLKEYNETSDVDLTNEIEKLEKRLAKLEASIYSNMTAWDKFQVARHPERPTTLDYISLLFEDFMELHGDRTFGDDAAIVGGIATFKGTPVTVIGHQRGKDTKDNLHRNFGMPHPEGFRKALRLMKQADKFGRPIICFIDTKGAYPGRAAEERGQSEAIARNLYEMSDMKVPIISIVIGEGGSGGALALGLGNQIFMLENAVFSVISPEGAAAILWKDASLAKKAAESMRITAGDLYELGITDGIIPEVKGGAHRDLAAQAEEINKTITKSLHALMAFSEEQLIEQRYDKFKKIGVYETL</sequence>
<evidence type="ECO:0000255" key="1">
    <source>
        <dbReference type="HAMAP-Rule" id="MF_00823"/>
    </source>
</evidence>
<evidence type="ECO:0000255" key="2">
    <source>
        <dbReference type="PROSITE-ProRule" id="PRU01137"/>
    </source>
</evidence>
<organism>
    <name type="scientific">Listeria innocua serovar 6a (strain ATCC BAA-680 / CLIP 11262)</name>
    <dbReference type="NCBI Taxonomy" id="272626"/>
    <lineage>
        <taxon>Bacteria</taxon>
        <taxon>Bacillati</taxon>
        <taxon>Bacillota</taxon>
        <taxon>Bacilli</taxon>
        <taxon>Bacillales</taxon>
        <taxon>Listeriaceae</taxon>
        <taxon>Listeria</taxon>
    </lineage>
</organism>
<dbReference type="EC" id="2.1.3.15" evidence="1"/>
<dbReference type="EMBL" id="AL596169">
    <property type="protein sequence ID" value="CAC96838.1"/>
    <property type="molecule type" value="Genomic_DNA"/>
</dbReference>
<dbReference type="PIR" id="AF1633">
    <property type="entry name" value="AF1633"/>
</dbReference>
<dbReference type="RefSeq" id="WP_003771994.1">
    <property type="nucleotide sequence ID" value="NC_003212.1"/>
</dbReference>
<dbReference type="SMR" id="Q92BE3"/>
<dbReference type="STRING" id="272626.gene:17565938"/>
<dbReference type="GeneID" id="93234989"/>
<dbReference type="KEGG" id="lin:accA"/>
<dbReference type="eggNOG" id="COG0825">
    <property type="taxonomic scope" value="Bacteria"/>
</dbReference>
<dbReference type="HOGENOM" id="CLU_015486_0_2_9"/>
<dbReference type="OrthoDB" id="9808023at2"/>
<dbReference type="UniPathway" id="UPA00655">
    <property type="reaction ID" value="UER00711"/>
</dbReference>
<dbReference type="Proteomes" id="UP000002513">
    <property type="component" value="Chromosome"/>
</dbReference>
<dbReference type="GO" id="GO:0009317">
    <property type="term" value="C:acetyl-CoA carboxylase complex"/>
    <property type="evidence" value="ECO:0007669"/>
    <property type="project" value="InterPro"/>
</dbReference>
<dbReference type="GO" id="GO:0003989">
    <property type="term" value="F:acetyl-CoA carboxylase activity"/>
    <property type="evidence" value="ECO:0007669"/>
    <property type="project" value="InterPro"/>
</dbReference>
<dbReference type="GO" id="GO:0005524">
    <property type="term" value="F:ATP binding"/>
    <property type="evidence" value="ECO:0007669"/>
    <property type="project" value="UniProtKB-KW"/>
</dbReference>
<dbReference type="GO" id="GO:0016743">
    <property type="term" value="F:carboxyl- or carbamoyltransferase activity"/>
    <property type="evidence" value="ECO:0007669"/>
    <property type="project" value="UniProtKB-UniRule"/>
</dbReference>
<dbReference type="GO" id="GO:0006633">
    <property type="term" value="P:fatty acid biosynthetic process"/>
    <property type="evidence" value="ECO:0007669"/>
    <property type="project" value="UniProtKB-KW"/>
</dbReference>
<dbReference type="GO" id="GO:2001295">
    <property type="term" value="P:malonyl-CoA biosynthetic process"/>
    <property type="evidence" value="ECO:0007669"/>
    <property type="project" value="UniProtKB-UniRule"/>
</dbReference>
<dbReference type="Gene3D" id="3.90.226.10">
    <property type="entry name" value="2-enoyl-CoA Hydratase, Chain A, domain 1"/>
    <property type="match status" value="1"/>
</dbReference>
<dbReference type="HAMAP" id="MF_00823">
    <property type="entry name" value="AcetylCoA_CT_alpha"/>
    <property type="match status" value="1"/>
</dbReference>
<dbReference type="InterPro" id="IPR001095">
    <property type="entry name" value="Acetyl_CoA_COase_a_su"/>
</dbReference>
<dbReference type="InterPro" id="IPR029045">
    <property type="entry name" value="ClpP/crotonase-like_dom_sf"/>
</dbReference>
<dbReference type="InterPro" id="IPR011763">
    <property type="entry name" value="COA_CT_C"/>
</dbReference>
<dbReference type="NCBIfam" id="TIGR00513">
    <property type="entry name" value="accA"/>
    <property type="match status" value="1"/>
</dbReference>
<dbReference type="NCBIfam" id="NF041504">
    <property type="entry name" value="AccA_sub"/>
    <property type="match status" value="1"/>
</dbReference>
<dbReference type="NCBIfam" id="NF004344">
    <property type="entry name" value="PRK05724.1"/>
    <property type="match status" value="1"/>
</dbReference>
<dbReference type="PANTHER" id="PTHR42853">
    <property type="entry name" value="ACETYL-COENZYME A CARBOXYLASE CARBOXYL TRANSFERASE SUBUNIT ALPHA"/>
    <property type="match status" value="1"/>
</dbReference>
<dbReference type="PANTHER" id="PTHR42853:SF3">
    <property type="entry name" value="ACETYL-COENZYME A CARBOXYLASE CARBOXYL TRANSFERASE SUBUNIT ALPHA, CHLOROPLASTIC"/>
    <property type="match status" value="1"/>
</dbReference>
<dbReference type="Pfam" id="PF03255">
    <property type="entry name" value="ACCA"/>
    <property type="match status" value="1"/>
</dbReference>
<dbReference type="PRINTS" id="PR01069">
    <property type="entry name" value="ACCCTRFRASEA"/>
</dbReference>
<dbReference type="SUPFAM" id="SSF52096">
    <property type="entry name" value="ClpP/crotonase"/>
    <property type="match status" value="1"/>
</dbReference>
<dbReference type="PROSITE" id="PS50989">
    <property type="entry name" value="COA_CT_CTER"/>
    <property type="match status" value="1"/>
</dbReference>
<feature type="chain" id="PRO_0000223782" description="Acetyl-coenzyme A carboxylase carboxyl transferase subunit alpha">
    <location>
        <begin position="1"/>
        <end position="318"/>
    </location>
</feature>
<feature type="domain" description="CoA carboxyltransferase C-terminal" evidence="2">
    <location>
        <begin position="38"/>
        <end position="292"/>
    </location>
</feature>
<reference key="1">
    <citation type="journal article" date="2001" name="Science">
        <title>Comparative genomics of Listeria species.</title>
        <authorList>
            <person name="Glaser P."/>
            <person name="Frangeul L."/>
            <person name="Buchrieser C."/>
            <person name="Rusniok C."/>
            <person name="Amend A."/>
            <person name="Baquero F."/>
            <person name="Berche P."/>
            <person name="Bloecker H."/>
            <person name="Brandt P."/>
            <person name="Chakraborty T."/>
            <person name="Charbit A."/>
            <person name="Chetouani F."/>
            <person name="Couve E."/>
            <person name="de Daruvar A."/>
            <person name="Dehoux P."/>
            <person name="Domann E."/>
            <person name="Dominguez-Bernal G."/>
            <person name="Duchaud E."/>
            <person name="Durant L."/>
            <person name="Dussurget O."/>
            <person name="Entian K.-D."/>
            <person name="Fsihi H."/>
            <person name="Garcia-del Portillo F."/>
            <person name="Garrido P."/>
            <person name="Gautier L."/>
            <person name="Goebel W."/>
            <person name="Gomez-Lopez N."/>
            <person name="Hain T."/>
            <person name="Hauf J."/>
            <person name="Jackson D."/>
            <person name="Jones L.-M."/>
            <person name="Kaerst U."/>
            <person name="Kreft J."/>
            <person name="Kuhn M."/>
            <person name="Kunst F."/>
            <person name="Kurapkat G."/>
            <person name="Madueno E."/>
            <person name="Maitournam A."/>
            <person name="Mata Vicente J."/>
            <person name="Ng E."/>
            <person name="Nedjari H."/>
            <person name="Nordsiek G."/>
            <person name="Novella S."/>
            <person name="de Pablos B."/>
            <person name="Perez-Diaz J.-C."/>
            <person name="Purcell R."/>
            <person name="Remmel B."/>
            <person name="Rose M."/>
            <person name="Schlueter T."/>
            <person name="Simoes N."/>
            <person name="Tierrez A."/>
            <person name="Vazquez-Boland J.-A."/>
            <person name="Voss H."/>
            <person name="Wehland J."/>
            <person name="Cossart P."/>
        </authorList>
    </citation>
    <scope>NUCLEOTIDE SEQUENCE [LARGE SCALE GENOMIC DNA]</scope>
    <source>
        <strain>ATCC BAA-680 / CLIP 11262</strain>
    </source>
</reference>
<comment type="function">
    <text evidence="1">Component of the acetyl coenzyme A carboxylase (ACC) complex. First, biotin carboxylase catalyzes the carboxylation of biotin on its carrier protein (BCCP) and then the CO(2) group is transferred by the carboxyltransferase to acetyl-CoA to form malonyl-CoA.</text>
</comment>
<comment type="catalytic activity">
    <reaction evidence="1">
        <text>N(6)-carboxybiotinyl-L-lysyl-[protein] + acetyl-CoA = N(6)-biotinyl-L-lysyl-[protein] + malonyl-CoA</text>
        <dbReference type="Rhea" id="RHEA:54728"/>
        <dbReference type="Rhea" id="RHEA-COMP:10505"/>
        <dbReference type="Rhea" id="RHEA-COMP:10506"/>
        <dbReference type="ChEBI" id="CHEBI:57288"/>
        <dbReference type="ChEBI" id="CHEBI:57384"/>
        <dbReference type="ChEBI" id="CHEBI:83144"/>
        <dbReference type="ChEBI" id="CHEBI:83145"/>
        <dbReference type="EC" id="2.1.3.15"/>
    </reaction>
</comment>
<comment type="pathway">
    <text evidence="1">Lipid metabolism; malonyl-CoA biosynthesis; malonyl-CoA from acetyl-CoA: step 1/1.</text>
</comment>
<comment type="subunit">
    <text evidence="1">Acetyl-CoA carboxylase is a heterohexamer composed of biotin carboxyl carrier protein (AccB), biotin carboxylase (AccC) and two subunits each of ACCase subunit alpha (AccA) and ACCase subunit beta (AccD).</text>
</comment>
<comment type="subcellular location">
    <subcellularLocation>
        <location evidence="1">Cytoplasm</location>
    </subcellularLocation>
</comment>
<comment type="similarity">
    <text evidence="1">Belongs to the AccA family.</text>
</comment>
<keyword id="KW-0067">ATP-binding</keyword>
<keyword id="KW-0963">Cytoplasm</keyword>
<keyword id="KW-0275">Fatty acid biosynthesis</keyword>
<keyword id="KW-0276">Fatty acid metabolism</keyword>
<keyword id="KW-0444">Lipid biosynthesis</keyword>
<keyword id="KW-0443">Lipid metabolism</keyword>
<keyword id="KW-0547">Nucleotide-binding</keyword>
<keyword id="KW-0808">Transferase</keyword>
<gene>
    <name evidence="1" type="primary">accA</name>
    <name type="ordered locus">lin1607</name>
</gene>
<protein>
    <recommendedName>
        <fullName evidence="1">Acetyl-coenzyme A carboxylase carboxyl transferase subunit alpha</fullName>
        <shortName evidence="1">ACCase subunit alpha</shortName>
        <shortName evidence="1">Acetyl-CoA carboxylase carboxyltransferase subunit alpha</shortName>
        <ecNumber evidence="1">2.1.3.15</ecNumber>
    </recommendedName>
</protein>